<evidence type="ECO:0000255" key="1">
    <source>
        <dbReference type="HAMAP-Rule" id="MF_01325"/>
    </source>
</evidence>
<evidence type="ECO:0000305" key="2"/>
<name>RL3_PASMU</name>
<proteinExistence type="inferred from homology"/>
<reference key="1">
    <citation type="journal article" date="2001" name="Proc. Natl. Acad. Sci. U.S.A.">
        <title>Complete genomic sequence of Pasteurella multocida Pm70.</title>
        <authorList>
            <person name="May B.J."/>
            <person name="Zhang Q."/>
            <person name="Li L.L."/>
            <person name="Paustian M.L."/>
            <person name="Whittam T.S."/>
            <person name="Kapur V."/>
        </authorList>
    </citation>
    <scope>NUCLEOTIDE SEQUENCE [LARGE SCALE GENOMIC DNA]</scope>
    <source>
        <strain>Pm70</strain>
    </source>
</reference>
<sequence>MIGLVGRKVGMTRIFNEDGVSIPVTVIEIEANRVTQVKTVETDGYSAIQVTTGSKKASRVTKPEAGHFVKAGVEAGRGLWEFRTTEGEEFTLGQEINVDIFADVKKVDVTGTSKGKGFAGGVKRWNFRTQDATHGNSLSHRVLGSIGQNQTPGRVFKGKKMAGHLGNERVTVQSLEVVRVDAERKLLLVKGAVPGATNGDVIVKPAVKA</sequence>
<accession>Q9CL32</accession>
<organism>
    <name type="scientific">Pasteurella multocida (strain Pm70)</name>
    <dbReference type="NCBI Taxonomy" id="272843"/>
    <lineage>
        <taxon>Bacteria</taxon>
        <taxon>Pseudomonadati</taxon>
        <taxon>Pseudomonadota</taxon>
        <taxon>Gammaproteobacteria</taxon>
        <taxon>Pasteurellales</taxon>
        <taxon>Pasteurellaceae</taxon>
        <taxon>Pasteurella</taxon>
    </lineage>
</organism>
<keyword id="KW-0488">Methylation</keyword>
<keyword id="KW-1185">Reference proteome</keyword>
<keyword id="KW-0687">Ribonucleoprotein</keyword>
<keyword id="KW-0689">Ribosomal protein</keyword>
<keyword id="KW-0694">RNA-binding</keyword>
<keyword id="KW-0699">rRNA-binding</keyword>
<protein>
    <recommendedName>
        <fullName evidence="1">Large ribosomal subunit protein uL3</fullName>
    </recommendedName>
    <alternativeName>
        <fullName evidence="2">50S ribosomal protein L3</fullName>
    </alternativeName>
</protein>
<feature type="chain" id="PRO_0000077131" description="Large ribosomal subunit protein uL3">
    <location>
        <begin position="1"/>
        <end position="209"/>
    </location>
</feature>
<feature type="modified residue" description="N5-methylglutamine" evidence="1">
    <location>
        <position position="150"/>
    </location>
</feature>
<comment type="function">
    <text evidence="1">One of the primary rRNA binding proteins, it binds directly near the 3'-end of the 23S rRNA, where it nucleates assembly of the 50S subunit.</text>
</comment>
<comment type="subunit">
    <text evidence="1">Part of the 50S ribosomal subunit. Forms a cluster with proteins L14 and L19.</text>
</comment>
<comment type="PTM">
    <text evidence="1">Methylated by PrmB.</text>
</comment>
<comment type="similarity">
    <text evidence="1">Belongs to the universal ribosomal protein uL3 family.</text>
</comment>
<dbReference type="EMBL" id="AE004439">
    <property type="protein sequence ID" value="AAK03499.1"/>
    <property type="molecule type" value="Genomic_DNA"/>
</dbReference>
<dbReference type="RefSeq" id="WP_005724032.1">
    <property type="nucleotide sequence ID" value="NC_002663.1"/>
</dbReference>
<dbReference type="SMR" id="Q9CL32"/>
<dbReference type="STRING" id="272843.PM1415"/>
<dbReference type="EnsemblBacteria" id="AAK03499">
    <property type="protein sequence ID" value="AAK03499"/>
    <property type="gene ID" value="PM1415"/>
</dbReference>
<dbReference type="GeneID" id="77207026"/>
<dbReference type="KEGG" id="pmu:PM1415"/>
<dbReference type="HOGENOM" id="CLU_044142_4_1_6"/>
<dbReference type="OrthoDB" id="9806135at2"/>
<dbReference type="Proteomes" id="UP000000809">
    <property type="component" value="Chromosome"/>
</dbReference>
<dbReference type="GO" id="GO:0022625">
    <property type="term" value="C:cytosolic large ribosomal subunit"/>
    <property type="evidence" value="ECO:0007669"/>
    <property type="project" value="TreeGrafter"/>
</dbReference>
<dbReference type="GO" id="GO:0019843">
    <property type="term" value="F:rRNA binding"/>
    <property type="evidence" value="ECO:0007669"/>
    <property type="project" value="UniProtKB-UniRule"/>
</dbReference>
<dbReference type="GO" id="GO:0003735">
    <property type="term" value="F:structural constituent of ribosome"/>
    <property type="evidence" value="ECO:0007669"/>
    <property type="project" value="InterPro"/>
</dbReference>
<dbReference type="GO" id="GO:0006412">
    <property type="term" value="P:translation"/>
    <property type="evidence" value="ECO:0007669"/>
    <property type="project" value="UniProtKB-UniRule"/>
</dbReference>
<dbReference type="FunFam" id="2.40.30.10:FF:000004">
    <property type="entry name" value="50S ribosomal protein L3"/>
    <property type="match status" value="1"/>
</dbReference>
<dbReference type="FunFam" id="3.30.160.810:FF:000001">
    <property type="entry name" value="50S ribosomal protein L3"/>
    <property type="match status" value="1"/>
</dbReference>
<dbReference type="Gene3D" id="3.30.160.810">
    <property type="match status" value="1"/>
</dbReference>
<dbReference type="Gene3D" id="2.40.30.10">
    <property type="entry name" value="Translation factors"/>
    <property type="match status" value="1"/>
</dbReference>
<dbReference type="HAMAP" id="MF_01325_B">
    <property type="entry name" value="Ribosomal_uL3_B"/>
    <property type="match status" value="1"/>
</dbReference>
<dbReference type="InterPro" id="IPR000597">
    <property type="entry name" value="Ribosomal_uL3"/>
</dbReference>
<dbReference type="InterPro" id="IPR019927">
    <property type="entry name" value="Ribosomal_uL3_bac/org-type"/>
</dbReference>
<dbReference type="InterPro" id="IPR019926">
    <property type="entry name" value="Ribosomal_uL3_CS"/>
</dbReference>
<dbReference type="InterPro" id="IPR009000">
    <property type="entry name" value="Transl_B-barrel_sf"/>
</dbReference>
<dbReference type="NCBIfam" id="TIGR03625">
    <property type="entry name" value="L3_bact"/>
    <property type="match status" value="1"/>
</dbReference>
<dbReference type="PANTHER" id="PTHR11229">
    <property type="entry name" value="50S RIBOSOMAL PROTEIN L3"/>
    <property type="match status" value="1"/>
</dbReference>
<dbReference type="PANTHER" id="PTHR11229:SF16">
    <property type="entry name" value="LARGE RIBOSOMAL SUBUNIT PROTEIN UL3C"/>
    <property type="match status" value="1"/>
</dbReference>
<dbReference type="Pfam" id="PF00297">
    <property type="entry name" value="Ribosomal_L3"/>
    <property type="match status" value="1"/>
</dbReference>
<dbReference type="SUPFAM" id="SSF50447">
    <property type="entry name" value="Translation proteins"/>
    <property type="match status" value="1"/>
</dbReference>
<dbReference type="PROSITE" id="PS00474">
    <property type="entry name" value="RIBOSOMAL_L3"/>
    <property type="match status" value="1"/>
</dbReference>
<gene>
    <name evidence="1" type="primary">rplC</name>
    <name evidence="1" type="synonym">rpl3</name>
    <name type="ordered locus">PM1415</name>
</gene>